<sequence>MSYNSFGHLFRVTTWGESHGPAIGCVVDGVPPRIPLSEADIQPFLDRRRPGQSRFTTQRREPDIVRILSGVHGGVTTGTPVALQIENTDQRSQDYANIADRFRPGHADIAYHWKYGVRDPRGGGRSSARETATRVAAGAIARKILGERVRIRGALVQMGRHAIDRARFDWDEVDRNAFFCPDPEAAKAWAEELDAVRKAGSSLGAVVEVVAEGISPGLGAPVYAKLDADLAAAMMSINAVKGVEIGDGFAAAALRGEENADEMRMNEDGTVRFLANHAGGVLGGISTGQPVIVRFAVKPTSSILTPVHSVDSDGDEVDIQTKGRHDPCVGIRAVPVGEAMMACVLADQLLLHRAQCGETGAGRLPLAKK</sequence>
<reference key="1">
    <citation type="submission" date="2007-05" db="EMBL/GenBank/DDBJ databases">
        <title>Complete sequence of chromosome of Acidiphilium cryptum JF-5.</title>
        <authorList>
            <consortium name="US DOE Joint Genome Institute"/>
            <person name="Copeland A."/>
            <person name="Lucas S."/>
            <person name="Lapidus A."/>
            <person name="Barry K."/>
            <person name="Detter J.C."/>
            <person name="Glavina del Rio T."/>
            <person name="Hammon N."/>
            <person name="Israni S."/>
            <person name="Dalin E."/>
            <person name="Tice H."/>
            <person name="Pitluck S."/>
            <person name="Sims D."/>
            <person name="Brettin T."/>
            <person name="Bruce D."/>
            <person name="Han C."/>
            <person name="Schmutz J."/>
            <person name="Larimer F."/>
            <person name="Land M."/>
            <person name="Hauser L."/>
            <person name="Kyrpides N."/>
            <person name="Kim E."/>
            <person name="Magnuson T."/>
            <person name="Richardson P."/>
        </authorList>
    </citation>
    <scope>NUCLEOTIDE SEQUENCE [LARGE SCALE GENOMIC DNA]</scope>
    <source>
        <strain>JF-5</strain>
    </source>
</reference>
<evidence type="ECO:0000255" key="1">
    <source>
        <dbReference type="HAMAP-Rule" id="MF_00300"/>
    </source>
</evidence>
<name>AROC_ACICJ</name>
<protein>
    <recommendedName>
        <fullName evidence="1">Chorismate synthase</fullName>
        <shortName evidence="1">CS</shortName>
        <ecNumber evidence="1">4.2.3.5</ecNumber>
    </recommendedName>
    <alternativeName>
        <fullName evidence="1">5-enolpyruvylshikimate-3-phosphate phospholyase</fullName>
    </alternativeName>
</protein>
<dbReference type="EC" id="4.2.3.5" evidence="1"/>
<dbReference type="EMBL" id="CP000697">
    <property type="protein sequence ID" value="ABQ30531.1"/>
    <property type="molecule type" value="Genomic_DNA"/>
</dbReference>
<dbReference type="RefSeq" id="WP_011942160.1">
    <property type="nucleotide sequence ID" value="NC_009484.1"/>
</dbReference>
<dbReference type="SMR" id="A5FY49"/>
<dbReference type="STRING" id="349163.Acry_1320"/>
<dbReference type="KEGG" id="acr:Acry_1320"/>
<dbReference type="eggNOG" id="COG0082">
    <property type="taxonomic scope" value="Bacteria"/>
</dbReference>
<dbReference type="HOGENOM" id="CLU_034547_0_0_5"/>
<dbReference type="UniPathway" id="UPA00053">
    <property type="reaction ID" value="UER00090"/>
</dbReference>
<dbReference type="Proteomes" id="UP000000245">
    <property type="component" value="Chromosome"/>
</dbReference>
<dbReference type="GO" id="GO:0005829">
    <property type="term" value="C:cytosol"/>
    <property type="evidence" value="ECO:0007669"/>
    <property type="project" value="TreeGrafter"/>
</dbReference>
<dbReference type="GO" id="GO:0004107">
    <property type="term" value="F:chorismate synthase activity"/>
    <property type="evidence" value="ECO:0007669"/>
    <property type="project" value="UniProtKB-UniRule"/>
</dbReference>
<dbReference type="GO" id="GO:0010181">
    <property type="term" value="F:FMN binding"/>
    <property type="evidence" value="ECO:0007669"/>
    <property type="project" value="TreeGrafter"/>
</dbReference>
<dbReference type="GO" id="GO:0008652">
    <property type="term" value="P:amino acid biosynthetic process"/>
    <property type="evidence" value="ECO:0007669"/>
    <property type="project" value="UniProtKB-KW"/>
</dbReference>
<dbReference type="GO" id="GO:0009073">
    <property type="term" value="P:aromatic amino acid family biosynthetic process"/>
    <property type="evidence" value="ECO:0007669"/>
    <property type="project" value="UniProtKB-KW"/>
</dbReference>
<dbReference type="GO" id="GO:0009423">
    <property type="term" value="P:chorismate biosynthetic process"/>
    <property type="evidence" value="ECO:0007669"/>
    <property type="project" value="UniProtKB-UniRule"/>
</dbReference>
<dbReference type="CDD" id="cd07304">
    <property type="entry name" value="Chorismate_synthase"/>
    <property type="match status" value="1"/>
</dbReference>
<dbReference type="Gene3D" id="3.60.150.10">
    <property type="entry name" value="Chorismate synthase AroC"/>
    <property type="match status" value="1"/>
</dbReference>
<dbReference type="HAMAP" id="MF_00300">
    <property type="entry name" value="Chorismate_synth"/>
    <property type="match status" value="1"/>
</dbReference>
<dbReference type="InterPro" id="IPR000453">
    <property type="entry name" value="Chorismate_synth"/>
</dbReference>
<dbReference type="InterPro" id="IPR035904">
    <property type="entry name" value="Chorismate_synth_AroC_sf"/>
</dbReference>
<dbReference type="InterPro" id="IPR020541">
    <property type="entry name" value="Chorismate_synthase_CS"/>
</dbReference>
<dbReference type="NCBIfam" id="TIGR00033">
    <property type="entry name" value="aroC"/>
    <property type="match status" value="1"/>
</dbReference>
<dbReference type="NCBIfam" id="NF003793">
    <property type="entry name" value="PRK05382.1"/>
    <property type="match status" value="1"/>
</dbReference>
<dbReference type="PANTHER" id="PTHR21085">
    <property type="entry name" value="CHORISMATE SYNTHASE"/>
    <property type="match status" value="1"/>
</dbReference>
<dbReference type="PANTHER" id="PTHR21085:SF0">
    <property type="entry name" value="CHORISMATE SYNTHASE"/>
    <property type="match status" value="1"/>
</dbReference>
<dbReference type="Pfam" id="PF01264">
    <property type="entry name" value="Chorismate_synt"/>
    <property type="match status" value="1"/>
</dbReference>
<dbReference type="PIRSF" id="PIRSF001456">
    <property type="entry name" value="Chorismate_synth"/>
    <property type="match status" value="1"/>
</dbReference>
<dbReference type="SUPFAM" id="SSF103263">
    <property type="entry name" value="Chorismate synthase, AroC"/>
    <property type="match status" value="1"/>
</dbReference>
<dbReference type="PROSITE" id="PS00787">
    <property type="entry name" value="CHORISMATE_SYNTHASE_1"/>
    <property type="match status" value="1"/>
</dbReference>
<dbReference type="PROSITE" id="PS00788">
    <property type="entry name" value="CHORISMATE_SYNTHASE_2"/>
    <property type="match status" value="1"/>
</dbReference>
<dbReference type="PROSITE" id="PS00789">
    <property type="entry name" value="CHORISMATE_SYNTHASE_3"/>
    <property type="match status" value="1"/>
</dbReference>
<proteinExistence type="inferred from homology"/>
<accession>A5FY49</accession>
<gene>
    <name evidence="1" type="primary">aroC</name>
    <name type="ordered locus">Acry_1320</name>
</gene>
<keyword id="KW-0028">Amino-acid biosynthesis</keyword>
<keyword id="KW-0057">Aromatic amino acid biosynthesis</keyword>
<keyword id="KW-0274">FAD</keyword>
<keyword id="KW-0285">Flavoprotein</keyword>
<keyword id="KW-0288">FMN</keyword>
<keyword id="KW-0456">Lyase</keyword>
<keyword id="KW-0521">NADP</keyword>
<keyword id="KW-1185">Reference proteome</keyword>
<organism>
    <name type="scientific">Acidiphilium cryptum (strain JF-5)</name>
    <dbReference type="NCBI Taxonomy" id="349163"/>
    <lineage>
        <taxon>Bacteria</taxon>
        <taxon>Pseudomonadati</taxon>
        <taxon>Pseudomonadota</taxon>
        <taxon>Alphaproteobacteria</taxon>
        <taxon>Acetobacterales</taxon>
        <taxon>Acidocellaceae</taxon>
        <taxon>Acidiphilium</taxon>
    </lineage>
</organism>
<feature type="chain" id="PRO_0000322378" description="Chorismate synthase">
    <location>
        <begin position="1"/>
        <end position="369"/>
    </location>
</feature>
<feature type="binding site" evidence="1">
    <location>
        <position position="48"/>
    </location>
    <ligand>
        <name>NADP(+)</name>
        <dbReference type="ChEBI" id="CHEBI:58349"/>
    </ligand>
</feature>
<feature type="binding site" evidence="1">
    <location>
        <position position="54"/>
    </location>
    <ligand>
        <name>NADP(+)</name>
        <dbReference type="ChEBI" id="CHEBI:58349"/>
    </ligand>
</feature>
<feature type="binding site" evidence="1">
    <location>
        <begin position="125"/>
        <end position="127"/>
    </location>
    <ligand>
        <name>FMN</name>
        <dbReference type="ChEBI" id="CHEBI:58210"/>
    </ligand>
</feature>
<feature type="binding site" evidence="1">
    <location>
        <begin position="238"/>
        <end position="239"/>
    </location>
    <ligand>
        <name>FMN</name>
        <dbReference type="ChEBI" id="CHEBI:58210"/>
    </ligand>
</feature>
<feature type="binding site" evidence="1">
    <location>
        <position position="283"/>
    </location>
    <ligand>
        <name>FMN</name>
        <dbReference type="ChEBI" id="CHEBI:58210"/>
    </ligand>
</feature>
<feature type="binding site" evidence="1">
    <location>
        <begin position="298"/>
        <end position="302"/>
    </location>
    <ligand>
        <name>FMN</name>
        <dbReference type="ChEBI" id="CHEBI:58210"/>
    </ligand>
</feature>
<feature type="binding site" evidence="1">
    <location>
        <position position="324"/>
    </location>
    <ligand>
        <name>FMN</name>
        <dbReference type="ChEBI" id="CHEBI:58210"/>
    </ligand>
</feature>
<comment type="function">
    <text evidence="1">Catalyzes the anti-1,4-elimination of the C-3 phosphate and the C-6 proR hydrogen from 5-enolpyruvylshikimate-3-phosphate (EPSP) to yield chorismate, which is the branch point compound that serves as the starting substrate for the three terminal pathways of aromatic amino acid biosynthesis. This reaction introduces a second double bond into the aromatic ring system.</text>
</comment>
<comment type="catalytic activity">
    <reaction evidence="1">
        <text>5-O-(1-carboxyvinyl)-3-phosphoshikimate = chorismate + phosphate</text>
        <dbReference type="Rhea" id="RHEA:21020"/>
        <dbReference type="ChEBI" id="CHEBI:29748"/>
        <dbReference type="ChEBI" id="CHEBI:43474"/>
        <dbReference type="ChEBI" id="CHEBI:57701"/>
        <dbReference type="EC" id="4.2.3.5"/>
    </reaction>
</comment>
<comment type="cofactor">
    <cofactor evidence="1">
        <name>FMNH2</name>
        <dbReference type="ChEBI" id="CHEBI:57618"/>
    </cofactor>
    <text evidence="1">Reduced FMN (FMNH(2)).</text>
</comment>
<comment type="pathway">
    <text evidence="1">Metabolic intermediate biosynthesis; chorismate biosynthesis; chorismate from D-erythrose 4-phosphate and phosphoenolpyruvate: step 7/7.</text>
</comment>
<comment type="subunit">
    <text evidence="1">Homotetramer.</text>
</comment>
<comment type="similarity">
    <text evidence="1">Belongs to the chorismate synthase family.</text>
</comment>